<name>CAP_DICDI</name>
<proteinExistence type="evidence at protein level"/>
<evidence type="ECO:0000255" key="1">
    <source>
        <dbReference type="PROSITE-ProRule" id="PRU00659"/>
    </source>
</evidence>
<evidence type="ECO:0000256" key="2">
    <source>
        <dbReference type="SAM" id="MobiDB-lite"/>
    </source>
</evidence>
<evidence type="ECO:0000305" key="3"/>
<evidence type="ECO:0007829" key="4">
    <source>
        <dbReference type="PDB" id="1S0P"/>
    </source>
</evidence>
<evidence type="ECO:0007829" key="5">
    <source>
        <dbReference type="PDB" id="1TJF"/>
    </source>
</evidence>
<dbReference type="EMBL" id="U43027">
    <property type="protein sequence ID" value="AAB09713.1"/>
    <property type="molecule type" value="mRNA"/>
</dbReference>
<dbReference type="EMBL" id="AAFI02000125">
    <property type="protein sequence ID" value="EAL63006.1"/>
    <property type="molecule type" value="Genomic_DNA"/>
</dbReference>
<dbReference type="RefSeq" id="XP_636512.1">
    <property type="nucleotide sequence ID" value="XM_631420.1"/>
</dbReference>
<dbReference type="PDB" id="1S0P">
    <property type="method" value="X-ray"/>
    <property type="resolution" value="1.40 A"/>
    <property type="chains" value="A/B=51-226"/>
</dbReference>
<dbReference type="PDB" id="1TJF">
    <property type="method" value="X-ray"/>
    <property type="resolution" value="2.21 A"/>
    <property type="chains" value="A/B=42-227"/>
</dbReference>
<dbReference type="PDBsum" id="1S0P"/>
<dbReference type="PDBsum" id="1TJF"/>
<dbReference type="BMRB" id="P54654"/>
<dbReference type="SMR" id="P54654"/>
<dbReference type="FunCoup" id="P54654">
    <property type="interactions" value="496"/>
</dbReference>
<dbReference type="STRING" id="44689.P54654"/>
<dbReference type="GlyGen" id="P54654">
    <property type="glycosylation" value="1 site"/>
</dbReference>
<dbReference type="PaxDb" id="44689-DDB0191139"/>
<dbReference type="EnsemblProtists" id="EAL63006">
    <property type="protein sequence ID" value="EAL63006"/>
    <property type="gene ID" value="DDB_G0288769"/>
</dbReference>
<dbReference type="GeneID" id="8626797"/>
<dbReference type="KEGG" id="ddi:DDB_G0288769"/>
<dbReference type="dictyBase" id="DDB_G0288769">
    <property type="gene designation" value="cap"/>
</dbReference>
<dbReference type="VEuPathDB" id="AmoebaDB:DDB_G0288769"/>
<dbReference type="eggNOG" id="KOG2675">
    <property type="taxonomic scope" value="Eukaryota"/>
</dbReference>
<dbReference type="HOGENOM" id="CLU_015780_1_0_1"/>
<dbReference type="InParanoid" id="P54654"/>
<dbReference type="OMA" id="KSQQTHK"/>
<dbReference type="PhylomeDB" id="P54654"/>
<dbReference type="Reactome" id="R-DDI-6798695">
    <property type="pathway name" value="Neutrophil degranulation"/>
</dbReference>
<dbReference type="EvolutionaryTrace" id="P54654"/>
<dbReference type="PRO" id="PR:P54654"/>
<dbReference type="Proteomes" id="UP000002195">
    <property type="component" value="Chromosome 5"/>
</dbReference>
<dbReference type="GO" id="GO:0005938">
    <property type="term" value="C:cell cortex"/>
    <property type="evidence" value="ECO:0000314"/>
    <property type="project" value="dictyBase"/>
</dbReference>
<dbReference type="GO" id="GO:0005737">
    <property type="term" value="C:cytoplasm"/>
    <property type="evidence" value="ECO:0000314"/>
    <property type="project" value="dictyBase"/>
</dbReference>
<dbReference type="GO" id="GO:0031012">
    <property type="term" value="C:extracellular matrix"/>
    <property type="evidence" value="ECO:0007005"/>
    <property type="project" value="dictyBase"/>
</dbReference>
<dbReference type="GO" id="GO:0044354">
    <property type="term" value="C:macropinosome"/>
    <property type="evidence" value="ECO:0000314"/>
    <property type="project" value="dictyBase"/>
</dbReference>
<dbReference type="GO" id="GO:0001891">
    <property type="term" value="C:phagocytic cup"/>
    <property type="evidence" value="ECO:0000314"/>
    <property type="project" value="dictyBase"/>
</dbReference>
<dbReference type="GO" id="GO:0030670">
    <property type="term" value="C:phagocytic vesicle membrane"/>
    <property type="evidence" value="ECO:0000314"/>
    <property type="project" value="dictyBase"/>
</dbReference>
<dbReference type="GO" id="GO:0031143">
    <property type="term" value="C:pseudopodium"/>
    <property type="evidence" value="ECO:0000314"/>
    <property type="project" value="dictyBase"/>
</dbReference>
<dbReference type="GO" id="GO:0005774">
    <property type="term" value="C:vacuolar membrane"/>
    <property type="evidence" value="ECO:0000314"/>
    <property type="project" value="dictyBase"/>
</dbReference>
<dbReference type="GO" id="GO:0031982">
    <property type="term" value="C:vesicle"/>
    <property type="evidence" value="ECO:0000314"/>
    <property type="project" value="dictyBase"/>
</dbReference>
<dbReference type="GO" id="GO:0003779">
    <property type="term" value="F:actin binding"/>
    <property type="evidence" value="ECO:0000318"/>
    <property type="project" value="GO_Central"/>
</dbReference>
<dbReference type="GO" id="GO:0008179">
    <property type="term" value="F:adenylate cyclase binding"/>
    <property type="evidence" value="ECO:0000318"/>
    <property type="project" value="GO_Central"/>
</dbReference>
<dbReference type="GO" id="GO:0007015">
    <property type="term" value="P:actin filament organization"/>
    <property type="evidence" value="ECO:0000318"/>
    <property type="project" value="GO_Central"/>
</dbReference>
<dbReference type="GO" id="GO:0031152">
    <property type="term" value="P:aggregation involved in sorocarp development"/>
    <property type="evidence" value="ECO:0000316"/>
    <property type="project" value="dictyBase"/>
</dbReference>
<dbReference type="GO" id="GO:0019933">
    <property type="term" value="P:cAMP-mediated signaling"/>
    <property type="evidence" value="ECO:0000318"/>
    <property type="project" value="GO_Central"/>
</dbReference>
<dbReference type="GO" id="GO:0098609">
    <property type="term" value="P:cell-cell adhesion"/>
    <property type="evidence" value="ECO:0000316"/>
    <property type="project" value="dictyBase"/>
</dbReference>
<dbReference type="GO" id="GO:0033298">
    <property type="term" value="P:contractile vacuole organization"/>
    <property type="evidence" value="ECO:0000315"/>
    <property type="project" value="dictyBase"/>
</dbReference>
<dbReference type="GO" id="GO:0007163">
    <property type="term" value="P:establishment or maintenance of cell polarity"/>
    <property type="evidence" value="ECO:0000316"/>
    <property type="project" value="dictyBase"/>
</dbReference>
<dbReference type="GO" id="GO:0000281">
    <property type="term" value="P:mitotic cytokinesis"/>
    <property type="evidence" value="ECO:0000315"/>
    <property type="project" value="dictyBase"/>
</dbReference>
<dbReference type="GO" id="GO:0006907">
    <property type="term" value="P:pinocytosis"/>
    <property type="evidence" value="ECO:0000315"/>
    <property type="project" value="dictyBase"/>
</dbReference>
<dbReference type="GO" id="GO:0010468">
    <property type="term" value="P:regulation of gene expression"/>
    <property type="evidence" value="ECO:0000316"/>
    <property type="project" value="dictyBase"/>
</dbReference>
<dbReference type="GO" id="GO:0006970">
    <property type="term" value="P:response to osmotic stress"/>
    <property type="evidence" value="ECO:0000315"/>
    <property type="project" value="dictyBase"/>
</dbReference>
<dbReference type="GO" id="GO:0031153">
    <property type="term" value="P:slug development involved in sorocarp development"/>
    <property type="evidence" value="ECO:0000314"/>
    <property type="project" value="dictyBase"/>
</dbReference>
<dbReference type="FunFam" id="1.25.40.330:FF:000001">
    <property type="entry name" value="Adenylyl cyclase-associated protein"/>
    <property type="match status" value="1"/>
</dbReference>
<dbReference type="FunFam" id="2.160.20.70:FF:000001">
    <property type="entry name" value="Adenylyl cyclase-associated protein"/>
    <property type="match status" value="1"/>
</dbReference>
<dbReference type="Gene3D" id="2.160.20.70">
    <property type="match status" value="1"/>
</dbReference>
<dbReference type="Gene3D" id="1.25.40.330">
    <property type="entry name" value="Adenylate cyclase-associated CAP, N-terminal domain"/>
    <property type="match status" value="1"/>
</dbReference>
<dbReference type="InterPro" id="IPR001837">
    <property type="entry name" value="Adenylate_cyclase-assoc_CAP"/>
</dbReference>
<dbReference type="InterPro" id="IPR013912">
    <property type="entry name" value="Adenylate_cyclase-assoc_CAP_C"/>
</dbReference>
<dbReference type="InterPro" id="IPR013992">
    <property type="entry name" value="Adenylate_cyclase-assoc_CAP_N"/>
</dbReference>
<dbReference type="InterPro" id="IPR017901">
    <property type="entry name" value="C-CAP_CF_C-like"/>
</dbReference>
<dbReference type="InterPro" id="IPR016098">
    <property type="entry name" value="CAP/MinC_C"/>
</dbReference>
<dbReference type="InterPro" id="IPR036223">
    <property type="entry name" value="CAP_C_sf"/>
</dbReference>
<dbReference type="InterPro" id="IPR028417">
    <property type="entry name" value="CAP_CS_C"/>
</dbReference>
<dbReference type="InterPro" id="IPR018106">
    <property type="entry name" value="CAP_CS_N"/>
</dbReference>
<dbReference type="InterPro" id="IPR053950">
    <property type="entry name" value="CAP_N"/>
</dbReference>
<dbReference type="InterPro" id="IPR036222">
    <property type="entry name" value="CAP_N_sf"/>
</dbReference>
<dbReference type="InterPro" id="IPR006599">
    <property type="entry name" value="CARP_motif"/>
</dbReference>
<dbReference type="PANTHER" id="PTHR10652">
    <property type="entry name" value="ADENYLYL CYCLASE-ASSOCIATED PROTEIN"/>
    <property type="match status" value="1"/>
</dbReference>
<dbReference type="PANTHER" id="PTHR10652:SF0">
    <property type="entry name" value="ADENYLYL CYCLASE-ASSOCIATED PROTEIN"/>
    <property type="match status" value="1"/>
</dbReference>
<dbReference type="Pfam" id="PF08603">
    <property type="entry name" value="CAP_C"/>
    <property type="match status" value="1"/>
</dbReference>
<dbReference type="Pfam" id="PF21938">
    <property type="entry name" value="CAP_N"/>
    <property type="match status" value="1"/>
</dbReference>
<dbReference type="Pfam" id="PF01213">
    <property type="entry name" value="CAP_N-CM"/>
    <property type="match status" value="1"/>
</dbReference>
<dbReference type="SMART" id="SM00673">
    <property type="entry name" value="CARP"/>
    <property type="match status" value="2"/>
</dbReference>
<dbReference type="SUPFAM" id="SSF69340">
    <property type="entry name" value="C-terminal domain of adenylylcyclase associated protein"/>
    <property type="match status" value="1"/>
</dbReference>
<dbReference type="SUPFAM" id="SSF101278">
    <property type="entry name" value="N-terminal domain of adenylylcyclase associated protein, CAP"/>
    <property type="match status" value="1"/>
</dbReference>
<dbReference type="PROSITE" id="PS51329">
    <property type="entry name" value="C_CAP_COFACTOR_C"/>
    <property type="match status" value="1"/>
</dbReference>
<dbReference type="PROSITE" id="PS01088">
    <property type="entry name" value="CAP_1"/>
    <property type="match status" value="1"/>
</dbReference>
<dbReference type="PROSITE" id="PS01089">
    <property type="entry name" value="CAP_2"/>
    <property type="match status" value="1"/>
</dbReference>
<feature type="chain" id="PRO_0000205704" description="Adenylyl cyclase-associated protein">
    <location>
        <begin position="1"/>
        <end position="464"/>
    </location>
</feature>
<feature type="domain" description="C-CAP/cofactor C-like" evidence="1">
    <location>
        <begin position="304"/>
        <end position="443"/>
    </location>
</feature>
<feature type="region of interest" description="Disordered" evidence="2">
    <location>
        <begin position="215"/>
        <end position="249"/>
    </location>
</feature>
<feature type="compositionally biased region" description="Low complexity" evidence="2">
    <location>
        <begin position="224"/>
        <end position="247"/>
    </location>
</feature>
<feature type="helix" evidence="4">
    <location>
        <begin position="52"/>
        <end position="73"/>
    </location>
</feature>
<feature type="helix" evidence="4">
    <location>
        <begin position="75"/>
        <end position="100"/>
    </location>
</feature>
<feature type="helix" evidence="4">
    <location>
        <begin position="106"/>
        <end position="112"/>
    </location>
</feature>
<feature type="helix" evidence="4">
    <location>
        <begin position="114"/>
        <end position="128"/>
    </location>
</feature>
<feature type="turn" evidence="5">
    <location>
        <begin position="129"/>
        <end position="132"/>
    </location>
</feature>
<feature type="helix" evidence="4">
    <location>
        <begin position="136"/>
        <end position="143"/>
    </location>
</feature>
<feature type="helix" evidence="4">
    <location>
        <begin position="146"/>
        <end position="153"/>
    </location>
</feature>
<feature type="helix" evidence="4">
    <location>
        <begin position="158"/>
        <end position="180"/>
    </location>
</feature>
<feature type="turn" evidence="4">
    <location>
        <begin position="181"/>
        <end position="183"/>
    </location>
</feature>
<feature type="helix" evidence="4">
    <location>
        <begin position="185"/>
        <end position="208"/>
    </location>
</feature>
<feature type="strand" evidence="4">
    <location>
        <begin position="219"/>
        <end position="223"/>
    </location>
</feature>
<accession>P54654</accession>
<accession>Q54IG5</accession>
<organism>
    <name type="scientific">Dictyostelium discoideum</name>
    <name type="common">Social amoeba</name>
    <dbReference type="NCBI Taxonomy" id="44689"/>
    <lineage>
        <taxon>Eukaryota</taxon>
        <taxon>Amoebozoa</taxon>
        <taxon>Evosea</taxon>
        <taxon>Eumycetozoa</taxon>
        <taxon>Dictyostelia</taxon>
        <taxon>Dictyosteliales</taxon>
        <taxon>Dictyosteliaceae</taxon>
        <taxon>Dictyostelium</taxon>
    </lineage>
</organism>
<comment type="function">
    <text>May have a regulatory bifunctional role. Binds G-actin and PIP2. Involved in microfilament reorganization near the plasma membrane in a PIP2-regulated manner.</text>
</comment>
<comment type="subcellular location">
    <subcellularLocation>
        <location>Cell membrane</location>
        <topology>Peripheral membrane protein</topology>
    </subcellularLocation>
</comment>
<comment type="domain">
    <text>The C-terminus is responsible for sequestering G-actin. The N-terminus is required for the PIP2 modulation of cap function.</text>
</comment>
<comment type="similarity">
    <text evidence="3">Belongs to the CAP family.</text>
</comment>
<sequence length="464" mass="49641">MSEATIVELLKRLDQATTRLEAVEKSIASGVASSSSSSSPSSGAAGPSSASVKEFQNLVDQHITPFVALSKKLAPEVGNQVEQLVKAIDAEKALINTASQSKKPSQETLLELIKPLNNFAAEVGKIRDSNRSSKFFNNLSAISESIGFLSWVVVEPTPGPHVAEMRGSAEFYTNRILKEFKGVNQDQVDWVSNYVNFLKDLEKYIKQYHTTGLTWNPKGGDAKSATPAPASSAPAAPVAPAVSSTPVESKKGPGLGAVFGELSKGDGVTSGLKKVTNDMKSKNFTDKSSVVKAADTKVAKVDAPSRPAVFALQGNKWSIEYQVNNKEIVIAEPDSRQTVYIFQCVNSLVQIKGKVNAITLDGCKKTSIVFENAISSCEVVNCNGVEIQVTGRVPSIAIDKTSGCQIYLSKDSLETEIVSSKSSEMNVLIPGATENDDLVELAIPEQYKTSVKGNKLHTESTSHI</sequence>
<gene>
    <name type="primary">cap</name>
    <name type="ORF">DDB_G0288769</name>
</gene>
<keyword id="KW-0002">3D-structure</keyword>
<keyword id="KW-0009">Actin-binding</keyword>
<keyword id="KW-1003">Cell membrane</keyword>
<keyword id="KW-0472">Membrane</keyword>
<keyword id="KW-1185">Reference proteome</keyword>
<reference key="1">
    <citation type="journal article" date="1996" name="Mol. Biol. Cell">
        <title>Identification of a cyclase-associated protein (CAP) homologue in Dictyostelium discoideum and characterization of its interaction with actin.</title>
        <authorList>
            <person name="Gottwald U."/>
            <person name="Brokamp R."/>
            <person name="Karakesisoglou I."/>
            <person name="Schleicher M."/>
            <person name="Noegel A.A."/>
        </authorList>
    </citation>
    <scope>NUCLEOTIDE SEQUENCE [MRNA]</scope>
    <source>
        <strain>AX3</strain>
    </source>
</reference>
<reference key="2">
    <citation type="journal article" date="2005" name="Nature">
        <title>The genome of the social amoeba Dictyostelium discoideum.</title>
        <authorList>
            <person name="Eichinger L."/>
            <person name="Pachebat J.A."/>
            <person name="Gloeckner G."/>
            <person name="Rajandream M.A."/>
            <person name="Sucgang R."/>
            <person name="Berriman M."/>
            <person name="Song J."/>
            <person name="Olsen R."/>
            <person name="Szafranski K."/>
            <person name="Xu Q."/>
            <person name="Tunggal B."/>
            <person name="Kummerfeld S."/>
            <person name="Madera M."/>
            <person name="Konfortov B.A."/>
            <person name="Rivero F."/>
            <person name="Bankier A.T."/>
            <person name="Lehmann R."/>
            <person name="Hamlin N."/>
            <person name="Davies R."/>
            <person name="Gaudet P."/>
            <person name="Fey P."/>
            <person name="Pilcher K."/>
            <person name="Chen G."/>
            <person name="Saunders D."/>
            <person name="Sodergren E.J."/>
            <person name="Davis P."/>
            <person name="Kerhornou A."/>
            <person name="Nie X."/>
            <person name="Hall N."/>
            <person name="Anjard C."/>
            <person name="Hemphill L."/>
            <person name="Bason N."/>
            <person name="Farbrother P."/>
            <person name="Desany B."/>
            <person name="Just E."/>
            <person name="Morio T."/>
            <person name="Rost R."/>
            <person name="Churcher C.M."/>
            <person name="Cooper J."/>
            <person name="Haydock S."/>
            <person name="van Driessche N."/>
            <person name="Cronin A."/>
            <person name="Goodhead I."/>
            <person name="Muzny D.M."/>
            <person name="Mourier T."/>
            <person name="Pain A."/>
            <person name="Lu M."/>
            <person name="Harper D."/>
            <person name="Lindsay R."/>
            <person name="Hauser H."/>
            <person name="James K.D."/>
            <person name="Quiles M."/>
            <person name="Madan Babu M."/>
            <person name="Saito T."/>
            <person name="Buchrieser C."/>
            <person name="Wardroper A."/>
            <person name="Felder M."/>
            <person name="Thangavelu M."/>
            <person name="Johnson D."/>
            <person name="Knights A."/>
            <person name="Loulseged H."/>
            <person name="Mungall K.L."/>
            <person name="Oliver K."/>
            <person name="Price C."/>
            <person name="Quail M.A."/>
            <person name="Urushihara H."/>
            <person name="Hernandez J."/>
            <person name="Rabbinowitsch E."/>
            <person name="Steffen D."/>
            <person name="Sanders M."/>
            <person name="Ma J."/>
            <person name="Kohara Y."/>
            <person name="Sharp S."/>
            <person name="Simmonds M.N."/>
            <person name="Spiegler S."/>
            <person name="Tivey A."/>
            <person name="Sugano S."/>
            <person name="White B."/>
            <person name="Walker D."/>
            <person name="Woodward J.R."/>
            <person name="Winckler T."/>
            <person name="Tanaka Y."/>
            <person name="Shaulsky G."/>
            <person name="Schleicher M."/>
            <person name="Weinstock G.M."/>
            <person name="Rosenthal A."/>
            <person name="Cox E.C."/>
            <person name="Chisholm R.L."/>
            <person name="Gibbs R.A."/>
            <person name="Loomis W.F."/>
            <person name="Platzer M."/>
            <person name="Kay R.R."/>
            <person name="Williams J.G."/>
            <person name="Dear P.H."/>
            <person name="Noegel A.A."/>
            <person name="Barrell B.G."/>
            <person name="Kuspa A."/>
        </authorList>
    </citation>
    <scope>NUCLEOTIDE SEQUENCE [LARGE SCALE GENOMIC DNA]</scope>
    <source>
        <strain>AX4</strain>
    </source>
</reference>
<reference key="3">
    <citation type="journal article" date="2003" name="Structure">
        <title>Structure of the N-terminal domain of the adenylyl cyclase-associated protein (CAP) from Dictyostelium discoideum.</title>
        <authorList>
            <person name="Ksiazek D."/>
            <person name="Brandstetter H."/>
            <person name="Israel L."/>
            <person name="Bourenkov G.P."/>
            <person name="Katchalova G."/>
            <person name="Janssen K.P."/>
            <person name="Bartunik H.D."/>
            <person name="Noegel A.A."/>
            <person name="Schleicher M."/>
            <person name="Holak T.A."/>
        </authorList>
    </citation>
    <scope>X-RAY CRYSTALLOGRAPHY (1.4 ANGSTROMS) OF 51-226</scope>
</reference>
<reference key="4">
    <citation type="journal article" date="2005" name="Proteins">
        <title>Structural evidence for variable oligomerization of the N-terminal domain of cyclase-associated protein (CAP).</title>
        <authorList>
            <person name="Yusof A.M."/>
            <person name="Hu N.J."/>
            <person name="Wlodawer A."/>
            <person name="Hofmann A."/>
        </authorList>
    </citation>
    <scope>X-RAY CRYSTALLOGRAPHY (2.21 ANGSTROMS) OF 42-227</scope>
</reference>
<protein>
    <recommendedName>
        <fullName>Adenylyl cyclase-associated protein</fullName>
        <shortName>CAP</shortName>
    </recommendedName>
</protein>